<dbReference type="EC" id="2.5.1.141" evidence="1"/>
<dbReference type="EMBL" id="CP001176">
    <property type="protein sequence ID" value="ACK60310.1"/>
    <property type="molecule type" value="Genomic_DNA"/>
</dbReference>
<dbReference type="RefSeq" id="WP_001015058.1">
    <property type="nucleotide sequence ID" value="NZ_VEHB01000002.1"/>
</dbReference>
<dbReference type="SMR" id="B7H6T1"/>
<dbReference type="GeneID" id="93007167"/>
<dbReference type="KEGG" id="bcb:BCB4264_A4047"/>
<dbReference type="HOGENOM" id="CLU_029631_0_0_9"/>
<dbReference type="UniPathway" id="UPA00834">
    <property type="reaction ID" value="UER00712"/>
</dbReference>
<dbReference type="Proteomes" id="UP000007096">
    <property type="component" value="Chromosome"/>
</dbReference>
<dbReference type="GO" id="GO:0005886">
    <property type="term" value="C:plasma membrane"/>
    <property type="evidence" value="ECO:0007669"/>
    <property type="project" value="UniProtKB-SubCell"/>
</dbReference>
<dbReference type="GO" id="GO:0008495">
    <property type="term" value="F:protoheme IX farnesyltransferase activity"/>
    <property type="evidence" value="ECO:0007669"/>
    <property type="project" value="UniProtKB-UniRule"/>
</dbReference>
<dbReference type="GO" id="GO:0048034">
    <property type="term" value="P:heme O biosynthetic process"/>
    <property type="evidence" value="ECO:0007669"/>
    <property type="project" value="UniProtKB-UniRule"/>
</dbReference>
<dbReference type="CDD" id="cd13957">
    <property type="entry name" value="PT_UbiA_Cox10"/>
    <property type="match status" value="1"/>
</dbReference>
<dbReference type="FunFam" id="1.10.357.140:FF:000001">
    <property type="entry name" value="Protoheme IX farnesyltransferase"/>
    <property type="match status" value="1"/>
</dbReference>
<dbReference type="Gene3D" id="1.10.357.140">
    <property type="entry name" value="UbiA prenyltransferase"/>
    <property type="match status" value="1"/>
</dbReference>
<dbReference type="HAMAP" id="MF_00154">
    <property type="entry name" value="CyoE_CtaB"/>
    <property type="match status" value="1"/>
</dbReference>
<dbReference type="InterPro" id="IPR006369">
    <property type="entry name" value="Protohaem_IX_farnesylTrfase"/>
</dbReference>
<dbReference type="InterPro" id="IPR000537">
    <property type="entry name" value="UbiA_prenyltransferase"/>
</dbReference>
<dbReference type="InterPro" id="IPR030470">
    <property type="entry name" value="UbiA_prenylTrfase_CS"/>
</dbReference>
<dbReference type="InterPro" id="IPR044878">
    <property type="entry name" value="UbiA_sf"/>
</dbReference>
<dbReference type="NCBIfam" id="TIGR01473">
    <property type="entry name" value="cyoE_ctaB"/>
    <property type="match status" value="1"/>
</dbReference>
<dbReference type="PANTHER" id="PTHR43448">
    <property type="entry name" value="PROTOHEME IX FARNESYLTRANSFERASE, MITOCHONDRIAL"/>
    <property type="match status" value="1"/>
</dbReference>
<dbReference type="PANTHER" id="PTHR43448:SF2">
    <property type="entry name" value="PROTOHEME IX FARNESYLTRANSFERASE, MITOCHONDRIAL"/>
    <property type="match status" value="1"/>
</dbReference>
<dbReference type="Pfam" id="PF01040">
    <property type="entry name" value="UbiA"/>
    <property type="match status" value="1"/>
</dbReference>
<dbReference type="PROSITE" id="PS00943">
    <property type="entry name" value="UBIA"/>
    <property type="match status" value="1"/>
</dbReference>
<proteinExistence type="inferred from homology"/>
<sequence length="307" mass="34535">MNHATSELHDESAVTSVPETTRLQDLKALVKMGIVNSNTLTVFTGFWLALHFNGLSVMDNLDKLFFTIVGSGLVMAGVCCLNNYIDRDIDPLMERTKTRPTVTGKYKPGFALTFGLVILLLGFVFLLLTTPMAVLMGFIGAFTYVVLYSLWTKRKYTLNTVVGSISGAVPPLIGWAAIDPSLGHPIAWMLFLIMFIWQIPHFLALAMKRVDEYRNAGIPMLPVVHGFEITKRQIMIWTVCLLPLPFYMSGLGITFMVIATLLNIGWIVLGFYGFRKKDDIKWSVQMFVYSLNYLTILFVSMIVVTFF</sequence>
<evidence type="ECO:0000255" key="1">
    <source>
        <dbReference type="HAMAP-Rule" id="MF_00154"/>
    </source>
</evidence>
<organism>
    <name type="scientific">Bacillus cereus (strain B4264)</name>
    <dbReference type="NCBI Taxonomy" id="405532"/>
    <lineage>
        <taxon>Bacteria</taxon>
        <taxon>Bacillati</taxon>
        <taxon>Bacillota</taxon>
        <taxon>Bacilli</taxon>
        <taxon>Bacillales</taxon>
        <taxon>Bacillaceae</taxon>
        <taxon>Bacillus</taxon>
        <taxon>Bacillus cereus group</taxon>
    </lineage>
</organism>
<accession>B7H6T1</accession>
<reference key="1">
    <citation type="submission" date="2008-10" db="EMBL/GenBank/DDBJ databases">
        <title>Genome sequence of Bacillus cereus B4264.</title>
        <authorList>
            <person name="Dodson R.J."/>
            <person name="Durkin A.S."/>
            <person name="Rosovitz M.J."/>
            <person name="Rasko D.A."/>
            <person name="Hoffmaster A."/>
            <person name="Ravel J."/>
            <person name="Sutton G."/>
        </authorList>
    </citation>
    <scope>NUCLEOTIDE SEQUENCE [LARGE SCALE GENOMIC DNA]</scope>
    <source>
        <strain>B4264</strain>
    </source>
</reference>
<feature type="chain" id="PRO_1000199642" description="Protoheme IX farnesyltransferase">
    <location>
        <begin position="1"/>
        <end position="307"/>
    </location>
</feature>
<feature type="transmembrane region" description="Helical" evidence="1">
    <location>
        <begin position="32"/>
        <end position="52"/>
    </location>
</feature>
<feature type="transmembrane region" description="Helical" evidence="1">
    <location>
        <begin position="65"/>
        <end position="85"/>
    </location>
</feature>
<feature type="transmembrane region" description="Helical" evidence="1">
    <location>
        <begin position="108"/>
        <end position="128"/>
    </location>
</feature>
<feature type="transmembrane region" description="Helical" evidence="1">
    <location>
        <begin position="131"/>
        <end position="151"/>
    </location>
</feature>
<feature type="transmembrane region" description="Helical" evidence="1">
    <location>
        <begin position="158"/>
        <end position="178"/>
    </location>
</feature>
<feature type="transmembrane region" description="Helical" evidence="1">
    <location>
        <begin position="186"/>
        <end position="206"/>
    </location>
</feature>
<feature type="transmembrane region" description="Helical" evidence="1">
    <location>
        <begin position="251"/>
        <end position="271"/>
    </location>
</feature>
<feature type="transmembrane region" description="Helical" evidence="1">
    <location>
        <begin position="287"/>
        <end position="307"/>
    </location>
</feature>
<gene>
    <name evidence="1" type="primary">ctaB</name>
    <name type="ordered locus">BCB4264_A4047</name>
</gene>
<keyword id="KW-1003">Cell membrane</keyword>
<keyword id="KW-0350">Heme biosynthesis</keyword>
<keyword id="KW-0472">Membrane</keyword>
<keyword id="KW-0808">Transferase</keyword>
<keyword id="KW-0812">Transmembrane</keyword>
<keyword id="KW-1133">Transmembrane helix</keyword>
<name>COXX_BACC4</name>
<protein>
    <recommendedName>
        <fullName evidence="1">Protoheme IX farnesyltransferase</fullName>
        <ecNumber evidence="1">2.5.1.141</ecNumber>
    </recommendedName>
    <alternativeName>
        <fullName evidence="1">Heme B farnesyltransferase</fullName>
    </alternativeName>
    <alternativeName>
        <fullName evidence="1">Heme O synthase</fullName>
    </alternativeName>
</protein>
<comment type="function">
    <text evidence="1">Converts heme B (protoheme IX) to heme O by substitution of the vinyl group on carbon 2 of heme B porphyrin ring with a hydroxyethyl farnesyl side group.</text>
</comment>
<comment type="catalytic activity">
    <reaction evidence="1">
        <text>heme b + (2E,6E)-farnesyl diphosphate + H2O = Fe(II)-heme o + diphosphate</text>
        <dbReference type="Rhea" id="RHEA:28070"/>
        <dbReference type="ChEBI" id="CHEBI:15377"/>
        <dbReference type="ChEBI" id="CHEBI:33019"/>
        <dbReference type="ChEBI" id="CHEBI:60344"/>
        <dbReference type="ChEBI" id="CHEBI:60530"/>
        <dbReference type="ChEBI" id="CHEBI:175763"/>
        <dbReference type="EC" id="2.5.1.141"/>
    </reaction>
</comment>
<comment type="pathway">
    <text evidence="1">Porphyrin-containing compound metabolism; heme O biosynthesis; heme O from protoheme: step 1/1.</text>
</comment>
<comment type="subunit">
    <text evidence="1">Interacts with CtaA.</text>
</comment>
<comment type="subcellular location">
    <subcellularLocation>
        <location evidence="1">Cell membrane</location>
        <topology evidence="1">Multi-pass membrane protein</topology>
    </subcellularLocation>
</comment>
<comment type="miscellaneous">
    <text evidence="1">Carbon 2 of the heme B porphyrin ring is defined according to the Fischer nomenclature.</text>
</comment>
<comment type="similarity">
    <text evidence="1">Belongs to the UbiA prenyltransferase family. Protoheme IX farnesyltransferase subfamily.</text>
</comment>